<sequence>MIQESSPDALAAAAAIGNALSYNGRTVDKSKIPQYNQSFTSRTTSIAGINRYTMLSNSRTNSRMLLMNGNVRQYSKRTSSLPNQGHKNTSNNSAGRRQHRAHEDAETTFREFGGKQSSKVLNISSSTGQNSKSRTTSLGNSGSTIRTIKKYIPGPRGLMAVEVPVEVEPPRYSLSNRSNQRGGRAYSLPTRNNKTSLMHRNKTTKKAGSQEKKSESGGKSKNDYHGKVLSKMHTTSLKQRHNNVPLIPTTMNEETEQELQEDLHDPLEFKPMIISDDENSFIEPSVLDRSIPKKDKSGLSGREKKEEIETLLKEVHSLEEKISNIEIAKLNEEEREQSLILELRKVKLDEERRMELLKRELNIVKENADLEAQELKLIESKRKQHFHKGQEVASEVKSITIRQPTLSEPKPAYVPPEDVEKEPSTLSNQTQNIENAENIDSVDAEGNLVDPILLGSLNNSNFHMNSDNEVRCIADSNSLTGSELSDYNYIEGSATDLRATAKTSVESEIGGNQVGLKIPQDDDSEKQEERTKGKKSGLVDTNCFLVQKEDQEEALSDNEPESSEKFPSTSGIENVKLEDETGSVMDKNNGPNNDKDDDDDKDNDNDDDDDKDDDVNDDDKDENVDDDENVDDDDDDDDDDDDEYHDSYDVIMRDPVQIEQDISDVPSLKHPSEYSTETEDNKKKEQNSENAEVSQSGTNMAKYLRGANPYLTNTSSDTFSLDSENVNSKSSTDTTRVAPDLLKSSLQPQLRSDLKQSAVPSSTSSSIYSIETSPNIDSSTGKTASNTKTNSHGPPTSISKQKYDQSSSHQIPVMSPKRLDDKRKITNRSCLRTLRGSSNEATLSHNIVYPASDSSSSPPYHSKKPSNPPSSGNLASHEASKCFPKAPQASTTSRRLPDHVPLYIDKNNSALYPKEPPARKSSFEKERPAKDNLGFRSMSLREPLITKNATATAAENLDVEEKKEKGGHVSRKSWTFGLPSPLKRRTSHSTHTTNETEIVNPMTNFKNKTNENDMPILANKKSCNNDDSSPYTASSMNTNDVSEAGTEGHRFSLFGNKSQLSNRNISGGTATLESSNPDLPTALPLSVPVTIIDKNGEIHKLHNDDAAIKDKSHDRHGHSKFGRKLKKIFGRK</sequence>
<keyword id="KW-1003">Cell membrane</keyword>
<keyword id="KW-1017">Isopeptide bond</keyword>
<keyword id="KW-0472">Membrane</keyword>
<keyword id="KW-0597">Phosphoprotein</keyword>
<keyword id="KW-1185">Reference proteome</keyword>
<keyword id="KW-0832">Ubl conjugation</keyword>
<gene>
    <name type="primary">SEG2</name>
    <name type="ordered locus">YKL105C</name>
    <name type="ORF">YKL459</name>
</gene>
<protein>
    <recommendedName>
        <fullName>Eisosome protein SEG2</fullName>
    </recommendedName>
    <alternativeName>
        <fullName>Stability of eisosomes guaranteed protein 2</fullName>
    </alternativeName>
</protein>
<comment type="function">
    <text evidence="3">Likely plays only a minor role in eisosome assembly.</text>
</comment>
<comment type="subunit">
    <text evidence="3">Component of eisosomes, large cytoplasmic protein assemblies that localize to specialized domains termed MCCs on the plasma membrane.</text>
</comment>
<comment type="subcellular location">
    <subcellularLocation>
        <location evidence="3">Cell membrane</location>
        <topology evidence="3">Peripheral membrane protein</topology>
        <orientation evidence="3">Cytoplasmic side</orientation>
    </subcellularLocation>
    <text>Localizes to eisosomes.</text>
</comment>
<comment type="miscellaneous">
    <text evidence="2">Present with 538 molecules/cell in log phase SD medium.</text>
</comment>
<comment type="similarity">
    <text evidence="4">Belongs to the SEG1 family.</text>
</comment>
<evidence type="ECO:0000256" key="1">
    <source>
        <dbReference type="SAM" id="MobiDB-lite"/>
    </source>
</evidence>
<evidence type="ECO:0000269" key="2">
    <source>
    </source>
</evidence>
<evidence type="ECO:0000269" key="3">
    <source>
    </source>
</evidence>
<evidence type="ECO:0000305" key="4"/>
<evidence type="ECO:0007744" key="5">
    <source>
    </source>
</evidence>
<evidence type="ECO:0007744" key="6">
    <source>
    </source>
</evidence>
<evidence type="ECO:0007744" key="7">
    <source>
    </source>
</evidence>
<evidence type="ECO:0007744" key="8">
    <source>
    </source>
</evidence>
<reference key="1">
    <citation type="journal article" date="1993" name="Yeast">
        <title>The DNA sequence analysis of the HAP4-LAP4 region on chromosome XI of Saccharomyces cerevisiae suggests the presence of a second aspartate aminotransferase gene in yeast.</title>
        <authorList>
            <person name="Cheret G."/>
            <person name="Pallier C."/>
            <person name="Valens M."/>
            <person name="Daignan-Fornier B."/>
            <person name="Fukuhara H."/>
            <person name="Bolotin-Fukuhara M."/>
            <person name="Sor F."/>
        </authorList>
    </citation>
    <scope>NUCLEOTIDE SEQUENCE [GENOMIC DNA]</scope>
    <source>
        <strain>ATCC 204508 / S288c</strain>
    </source>
</reference>
<reference key="2">
    <citation type="journal article" date="1994" name="Nature">
        <title>Complete DNA sequence of yeast chromosome XI.</title>
        <authorList>
            <person name="Dujon B."/>
            <person name="Alexandraki D."/>
            <person name="Andre B."/>
            <person name="Ansorge W."/>
            <person name="Baladron V."/>
            <person name="Ballesta J.P.G."/>
            <person name="Banrevi A."/>
            <person name="Bolle P.-A."/>
            <person name="Bolotin-Fukuhara M."/>
            <person name="Bossier P."/>
            <person name="Bou G."/>
            <person name="Boyer J."/>
            <person name="Buitrago M.J."/>
            <person name="Cheret G."/>
            <person name="Colleaux L."/>
            <person name="Daignan-Fornier B."/>
            <person name="del Rey F."/>
            <person name="Dion C."/>
            <person name="Domdey H."/>
            <person name="Duesterhoeft A."/>
            <person name="Duesterhus S."/>
            <person name="Entian K.-D."/>
            <person name="Erfle H."/>
            <person name="Esteban P.F."/>
            <person name="Feldmann H."/>
            <person name="Fernandes L."/>
            <person name="Fobo G.M."/>
            <person name="Fritz C."/>
            <person name="Fukuhara H."/>
            <person name="Gabel C."/>
            <person name="Gaillon L."/>
            <person name="Garcia-Cantalejo J.M."/>
            <person name="Garcia-Ramirez J.J."/>
            <person name="Gent M.E."/>
            <person name="Ghazvini M."/>
            <person name="Goffeau A."/>
            <person name="Gonzalez A."/>
            <person name="Grothues D."/>
            <person name="Guerreiro P."/>
            <person name="Hegemann J.H."/>
            <person name="Hewitt N."/>
            <person name="Hilger F."/>
            <person name="Hollenberg C.P."/>
            <person name="Horaitis O."/>
            <person name="Indge K.J."/>
            <person name="Jacquier A."/>
            <person name="James C.M."/>
            <person name="Jauniaux J.-C."/>
            <person name="Jimenez A."/>
            <person name="Keuchel H."/>
            <person name="Kirchrath L."/>
            <person name="Kleine K."/>
            <person name="Koetter P."/>
            <person name="Legrain P."/>
            <person name="Liebl S."/>
            <person name="Louis E.J."/>
            <person name="Maia e Silva A."/>
            <person name="Marck C."/>
            <person name="Monnier A.-L."/>
            <person name="Moestl D."/>
            <person name="Mueller S."/>
            <person name="Obermaier B."/>
            <person name="Oliver S.G."/>
            <person name="Pallier C."/>
            <person name="Pascolo S."/>
            <person name="Pfeiffer F."/>
            <person name="Philippsen P."/>
            <person name="Planta R.J."/>
            <person name="Pohl F.M."/>
            <person name="Pohl T.M."/>
            <person name="Poehlmann R."/>
            <person name="Portetelle D."/>
            <person name="Purnelle B."/>
            <person name="Puzos V."/>
            <person name="Ramezani Rad M."/>
            <person name="Rasmussen S.W."/>
            <person name="Remacha M.A."/>
            <person name="Revuelta J.L."/>
            <person name="Richard G.-F."/>
            <person name="Rieger M."/>
            <person name="Rodrigues-Pousada C."/>
            <person name="Rose M."/>
            <person name="Rupp T."/>
            <person name="Santos M.A."/>
            <person name="Schwager C."/>
            <person name="Sensen C."/>
            <person name="Skala J."/>
            <person name="Soares H."/>
            <person name="Sor F."/>
            <person name="Stegemann J."/>
            <person name="Tettelin H."/>
            <person name="Thierry A."/>
            <person name="Tzermia M."/>
            <person name="Urrestarazu L.A."/>
            <person name="van Dyck L."/>
            <person name="van Vliet-Reedijk J.C."/>
            <person name="Valens M."/>
            <person name="Vandenbol M."/>
            <person name="Vilela C."/>
            <person name="Vissers S."/>
            <person name="von Wettstein D."/>
            <person name="Voss H."/>
            <person name="Wiemann S."/>
            <person name="Xu G."/>
            <person name="Zimmermann J."/>
            <person name="Haasemann M."/>
            <person name="Becker I."/>
            <person name="Mewes H.-W."/>
        </authorList>
    </citation>
    <scope>NUCLEOTIDE SEQUENCE [LARGE SCALE GENOMIC DNA]</scope>
    <source>
        <strain>ATCC 204508 / S288c</strain>
    </source>
</reference>
<reference key="3">
    <citation type="journal article" date="2014" name="G3 (Bethesda)">
        <title>The reference genome sequence of Saccharomyces cerevisiae: Then and now.</title>
        <authorList>
            <person name="Engel S.R."/>
            <person name="Dietrich F.S."/>
            <person name="Fisk D.G."/>
            <person name="Binkley G."/>
            <person name="Balakrishnan R."/>
            <person name="Costanzo M.C."/>
            <person name="Dwight S.S."/>
            <person name="Hitz B.C."/>
            <person name="Karra K."/>
            <person name="Nash R.S."/>
            <person name="Weng S."/>
            <person name="Wong E.D."/>
            <person name="Lloyd P."/>
            <person name="Skrzypek M.S."/>
            <person name="Miyasato S.R."/>
            <person name="Simison M."/>
            <person name="Cherry J.M."/>
        </authorList>
    </citation>
    <scope>GENOME REANNOTATION</scope>
    <source>
        <strain>ATCC 204508 / S288c</strain>
    </source>
</reference>
<reference key="4">
    <citation type="journal article" date="2003" name="Nature">
        <title>Global analysis of protein expression in yeast.</title>
        <authorList>
            <person name="Ghaemmaghami S."/>
            <person name="Huh W.-K."/>
            <person name="Bower K."/>
            <person name="Howson R.W."/>
            <person name="Belle A."/>
            <person name="Dephoure N."/>
            <person name="O'Shea E.K."/>
            <person name="Weissman J.S."/>
        </authorList>
    </citation>
    <scope>LEVEL OF PROTEIN EXPRESSION [LARGE SCALE ANALYSIS]</scope>
</reference>
<reference key="5">
    <citation type="journal article" date="2007" name="J. Proteome Res.">
        <title>Large-scale phosphorylation analysis of alpha-factor-arrested Saccharomyces cerevisiae.</title>
        <authorList>
            <person name="Li X."/>
            <person name="Gerber S.A."/>
            <person name="Rudner A.D."/>
            <person name="Beausoleil S.A."/>
            <person name="Haas W."/>
            <person name="Villen J."/>
            <person name="Elias J.E."/>
            <person name="Gygi S.P."/>
        </authorList>
    </citation>
    <scope>PHOSPHORYLATION [LARGE SCALE ANALYSIS] AT SER-507</scope>
    <scope>IDENTIFICATION BY MASS SPECTROMETRY [LARGE SCALE ANALYSIS]</scope>
    <source>
        <strain>ADR376</strain>
    </source>
</reference>
<reference key="6">
    <citation type="journal article" date="2007" name="Proc. Natl. Acad. Sci. U.S.A.">
        <title>Analysis of phosphorylation sites on proteins from Saccharomyces cerevisiae by electron transfer dissociation (ETD) mass spectrometry.</title>
        <authorList>
            <person name="Chi A."/>
            <person name="Huttenhower C."/>
            <person name="Geer L.Y."/>
            <person name="Coon J.J."/>
            <person name="Syka J.E.P."/>
            <person name="Bai D.L."/>
            <person name="Shabanowitz J."/>
            <person name="Burke D.J."/>
            <person name="Troyanskaya O.G."/>
            <person name="Hunt D.F."/>
        </authorList>
    </citation>
    <scope>IDENTIFICATION BY MASS SPECTROMETRY [LARGE SCALE ANALYSIS]</scope>
</reference>
<reference key="7">
    <citation type="journal article" date="2008" name="Mol. Cell. Proteomics">
        <title>A multidimensional chromatography technology for in-depth phosphoproteome analysis.</title>
        <authorList>
            <person name="Albuquerque C.P."/>
            <person name="Smolka M.B."/>
            <person name="Payne S.H."/>
            <person name="Bafna V."/>
            <person name="Eng J."/>
            <person name="Zhou H."/>
        </authorList>
    </citation>
    <scope>PHOSPHORYLATION [LARGE SCALE ANALYSIS] AT SER-280</scope>
    <scope>IDENTIFICATION BY MASS SPECTROMETRY [LARGE SCALE ANALYSIS]</scope>
</reference>
<reference key="8">
    <citation type="journal article" date="2009" name="Science">
        <title>Global analysis of Cdk1 substrate phosphorylation sites provides insights into evolution.</title>
        <authorList>
            <person name="Holt L.J."/>
            <person name="Tuch B.B."/>
            <person name="Villen J."/>
            <person name="Johnson A.D."/>
            <person name="Gygi S.P."/>
            <person name="Morgan D.O."/>
        </authorList>
    </citation>
    <scope>PHOSPHORYLATION [LARGE SCALE ANALYSIS] AT SER-137; SER-504; SER-507; SER-556; SER-980 AND SER-1022</scope>
    <scope>IDENTIFICATION BY MASS SPECTROMETRY [LARGE SCALE ANALYSIS]</scope>
</reference>
<reference key="9">
    <citation type="journal article" date="2012" name="J. Cell Biol.">
        <title>Seg1 controls eisosome assembly and shape.</title>
        <authorList>
            <person name="Moreira K.E."/>
            <person name="Schuck S."/>
            <person name="Schrul B."/>
            <person name="Frohlich F."/>
            <person name="Moseley J.B."/>
            <person name="Walther T.C."/>
            <person name="Walter P."/>
        </authorList>
    </citation>
    <scope>FUNCTION</scope>
    <scope>SUBCELLULAR LOCATION</scope>
    <scope>SUBUNIT</scope>
</reference>
<reference key="10">
    <citation type="journal article" date="2012" name="Proteomics">
        <title>Sites of ubiquitin attachment in Saccharomyces cerevisiae.</title>
        <authorList>
            <person name="Starita L.M."/>
            <person name="Lo R.S."/>
            <person name="Eng J.K."/>
            <person name="von Haller P.D."/>
            <person name="Fields S."/>
        </authorList>
    </citation>
    <scope>UBIQUITINATION [LARGE SCALE ANALYSIS] AT LYS-526 AND LYS-743</scope>
    <scope>IDENTIFICATION BY MASS SPECTROMETRY [LARGE SCALE ANALYSIS]</scope>
</reference>
<name>SEG2_YEAST</name>
<organism>
    <name type="scientific">Saccharomyces cerevisiae (strain ATCC 204508 / S288c)</name>
    <name type="common">Baker's yeast</name>
    <dbReference type="NCBI Taxonomy" id="559292"/>
    <lineage>
        <taxon>Eukaryota</taxon>
        <taxon>Fungi</taxon>
        <taxon>Dikarya</taxon>
        <taxon>Ascomycota</taxon>
        <taxon>Saccharomycotina</taxon>
        <taxon>Saccharomycetes</taxon>
        <taxon>Saccharomycetales</taxon>
        <taxon>Saccharomycetaceae</taxon>
        <taxon>Saccharomyces</taxon>
    </lineage>
</organism>
<feature type="chain" id="PRO_0000203159" description="Eisosome protein SEG2">
    <location>
        <begin position="1"/>
        <end position="1132"/>
    </location>
</feature>
<feature type="region of interest" description="Disordered" evidence="1">
    <location>
        <begin position="76"/>
        <end position="142"/>
    </location>
</feature>
<feature type="region of interest" description="Disordered" evidence="1">
    <location>
        <begin position="171"/>
        <end position="225"/>
    </location>
</feature>
<feature type="region of interest" description="Disordered" evidence="1">
    <location>
        <begin position="404"/>
        <end position="429"/>
    </location>
</feature>
<feature type="region of interest" description="Disordered" evidence="1">
    <location>
        <begin position="510"/>
        <end position="938"/>
    </location>
</feature>
<feature type="region of interest" description="Disordered" evidence="1">
    <location>
        <begin position="961"/>
        <end position="993"/>
    </location>
</feature>
<feature type="compositionally biased region" description="Polar residues" evidence="1">
    <location>
        <begin position="76"/>
        <end position="95"/>
    </location>
</feature>
<feature type="compositionally biased region" description="Basic and acidic residues" evidence="1">
    <location>
        <begin position="101"/>
        <end position="113"/>
    </location>
</feature>
<feature type="compositionally biased region" description="Polar residues" evidence="1">
    <location>
        <begin position="115"/>
        <end position="142"/>
    </location>
</feature>
<feature type="compositionally biased region" description="Basic and acidic residues" evidence="1">
    <location>
        <begin position="208"/>
        <end position="225"/>
    </location>
</feature>
<feature type="compositionally biased region" description="Acidic residues" evidence="1">
    <location>
        <begin position="550"/>
        <end position="561"/>
    </location>
</feature>
<feature type="compositionally biased region" description="Acidic residues" evidence="1">
    <location>
        <begin position="595"/>
        <end position="644"/>
    </location>
</feature>
<feature type="compositionally biased region" description="Polar residues" evidence="1">
    <location>
        <begin position="688"/>
        <end position="699"/>
    </location>
</feature>
<feature type="compositionally biased region" description="Polar residues" evidence="1">
    <location>
        <begin position="710"/>
        <end position="735"/>
    </location>
</feature>
<feature type="compositionally biased region" description="Low complexity" evidence="1">
    <location>
        <begin position="761"/>
        <end position="773"/>
    </location>
</feature>
<feature type="compositionally biased region" description="Polar residues" evidence="1">
    <location>
        <begin position="774"/>
        <end position="810"/>
    </location>
</feature>
<feature type="compositionally biased region" description="Polar residues" evidence="1">
    <location>
        <begin position="827"/>
        <end position="845"/>
    </location>
</feature>
<feature type="compositionally biased region" description="Low complexity" evidence="1">
    <location>
        <begin position="850"/>
        <end position="860"/>
    </location>
</feature>
<feature type="compositionally biased region" description="Basic and acidic residues" evidence="1">
    <location>
        <begin position="916"/>
        <end position="930"/>
    </location>
</feature>
<feature type="modified residue" description="Phosphoserine" evidence="7">
    <location>
        <position position="137"/>
    </location>
</feature>
<feature type="modified residue" description="Phosphoserine" evidence="6">
    <location>
        <position position="280"/>
    </location>
</feature>
<feature type="modified residue" description="Phosphoserine" evidence="7">
    <location>
        <position position="504"/>
    </location>
</feature>
<feature type="modified residue" description="Phosphoserine" evidence="5 7">
    <location>
        <position position="507"/>
    </location>
</feature>
<feature type="modified residue" description="Phosphoserine" evidence="7">
    <location>
        <position position="556"/>
    </location>
</feature>
<feature type="modified residue" description="Phosphoserine" evidence="7">
    <location>
        <position position="980"/>
    </location>
</feature>
<feature type="modified residue" description="Phosphoserine" evidence="7">
    <location>
        <position position="1022"/>
    </location>
</feature>
<feature type="cross-link" description="Glycyl lysine isopeptide (Lys-Gly) (interchain with G-Cter in ubiquitin)" evidence="8">
    <location>
        <position position="526"/>
    </location>
</feature>
<feature type="cross-link" description="Glycyl lysine isopeptide (Lys-Gly) (interchain with G-Cter in ubiquitin)" evidence="8">
    <location>
        <position position="743"/>
    </location>
</feature>
<accession>P34250</accession>
<accession>D6VXI3</accession>
<dbReference type="EMBL" id="X71133">
    <property type="protein sequence ID" value="CAA50452.1"/>
    <property type="molecule type" value="Genomic_DNA"/>
</dbReference>
<dbReference type="EMBL" id="Z28105">
    <property type="protein sequence ID" value="CAA81945.1"/>
    <property type="molecule type" value="Genomic_DNA"/>
</dbReference>
<dbReference type="EMBL" id="BK006944">
    <property type="protein sequence ID" value="DAA09053.1"/>
    <property type="molecule type" value="Genomic_DNA"/>
</dbReference>
<dbReference type="PIR" id="S37932">
    <property type="entry name" value="S37932"/>
</dbReference>
<dbReference type="RefSeq" id="NP_012817.1">
    <property type="nucleotide sequence ID" value="NM_001179671.1"/>
</dbReference>
<dbReference type="SMR" id="P34250"/>
<dbReference type="BioGRID" id="34029">
    <property type="interactions" value="148"/>
</dbReference>
<dbReference type="DIP" id="DIP-6273N"/>
<dbReference type="FunCoup" id="P34250">
    <property type="interactions" value="43"/>
</dbReference>
<dbReference type="IntAct" id="P34250">
    <property type="interactions" value="12"/>
</dbReference>
<dbReference type="MINT" id="P34250"/>
<dbReference type="STRING" id="4932.YKL105C"/>
<dbReference type="GlyGen" id="P34250">
    <property type="glycosylation" value="1 site, 1 O-linked glycan (1 site)"/>
</dbReference>
<dbReference type="iPTMnet" id="P34250"/>
<dbReference type="PaxDb" id="4932-YKL105C"/>
<dbReference type="PeptideAtlas" id="P34250"/>
<dbReference type="TopDownProteomics" id="P34250"/>
<dbReference type="EnsemblFungi" id="YKL105C_mRNA">
    <property type="protein sequence ID" value="YKL105C"/>
    <property type="gene ID" value="YKL105C"/>
</dbReference>
<dbReference type="GeneID" id="853756"/>
<dbReference type="KEGG" id="sce:YKL105C"/>
<dbReference type="AGR" id="SGD:S000001588"/>
<dbReference type="SGD" id="S000001588">
    <property type="gene designation" value="SEG2"/>
</dbReference>
<dbReference type="VEuPathDB" id="FungiDB:YKL105C"/>
<dbReference type="HOGENOM" id="CLU_309545_0_0_1"/>
<dbReference type="InParanoid" id="P34250"/>
<dbReference type="OMA" id="SHEESHQ"/>
<dbReference type="OrthoDB" id="4085524at2759"/>
<dbReference type="BioCyc" id="YEAST:G3O-31892-MONOMER"/>
<dbReference type="BioGRID-ORCS" id="853756">
    <property type="hits" value="0 hits in 10 CRISPR screens"/>
</dbReference>
<dbReference type="PRO" id="PR:P34250"/>
<dbReference type="Proteomes" id="UP000002311">
    <property type="component" value="Chromosome XI"/>
</dbReference>
<dbReference type="RNAct" id="P34250">
    <property type="molecule type" value="protein"/>
</dbReference>
<dbReference type="GO" id="GO:0071944">
    <property type="term" value="C:cell periphery"/>
    <property type="evidence" value="ECO:0007005"/>
    <property type="project" value="SGD"/>
</dbReference>
<dbReference type="GO" id="GO:0005886">
    <property type="term" value="C:plasma membrane"/>
    <property type="evidence" value="ECO:0007669"/>
    <property type="project" value="UniProtKB-SubCell"/>
</dbReference>
<proteinExistence type="evidence at protein level"/>